<feature type="chain" id="PRO_0000197895" description="Exodeoxyribonuclease 7 large subunit">
    <location>
        <begin position="1"/>
        <end position="446"/>
    </location>
</feature>
<evidence type="ECO:0000255" key="1">
    <source>
        <dbReference type="HAMAP-Rule" id="MF_00378"/>
    </source>
</evidence>
<evidence type="ECO:0000305" key="2"/>
<comment type="function">
    <text evidence="1">Bidirectionally degrades single-stranded DNA into large acid-insoluble oligonucleotides, which are then degraded further into small acid-soluble oligonucleotides.</text>
</comment>
<comment type="catalytic activity">
    <reaction evidence="1">
        <text>Exonucleolytic cleavage in either 5'- to 3'- or 3'- to 5'-direction to yield nucleoside 5'-phosphates.</text>
        <dbReference type="EC" id="3.1.11.6"/>
    </reaction>
</comment>
<comment type="subunit">
    <text evidence="1">Heterooligomer composed of large and small subunits.</text>
</comment>
<comment type="subcellular location">
    <subcellularLocation>
        <location evidence="1">Cytoplasm</location>
    </subcellularLocation>
</comment>
<comment type="similarity">
    <text evidence="1">Belongs to the XseA family.</text>
</comment>
<comment type="sequence caution" evidence="2">
    <conflict type="erroneous initiation">
        <sequence resource="EMBL-CDS" id="AAT87388"/>
    </conflict>
</comment>
<protein>
    <recommendedName>
        <fullName evidence="1">Exodeoxyribonuclease 7 large subunit</fullName>
        <ecNumber evidence="1">3.1.11.6</ecNumber>
    </recommendedName>
    <alternativeName>
        <fullName evidence="1">Exodeoxyribonuclease VII large subunit</fullName>
        <shortName evidence="1">Exonuclease VII large subunit</shortName>
    </alternativeName>
</protein>
<proteinExistence type="inferred from homology"/>
<sequence>MADYLTVTHLTKYLKLKFDRDPYLERVYLTGQVSNFRKRPTHQYFSLKDESAVIQATMWAGVYKKLGFDLEEGMKINVIGRVQLYEPSGSYSIVIEKAEPDGIGALALQFEQLKKKLTAEGYFEQKHKQPLPQFVSKIGVITSPSGAVIRDIITTVSRRFPGVEILLFPTKVQGDGAAQEVVANIRRANQREDLDLLIVGRGGGSIEDLWAFNEEIVVQAIFESQLPVISSVGHETDTTLADFVADRRAATPTAAAELATPITKTDLMSWIVERQNRSYQACLRRIKQRQEWVDKLSQSVIFRQPERLYDAYLQKIDRLSMTLMNTMKDRLSSAKENKVQLDHALANSQLQTKIERYQDRVATAKRLLMANMARQYDSQLARFEKAQDALLSLDVSRIIARGYAMIEKNQALVASVSQITKGDQLTIKMRDGQLDVEVKDVKNENI</sequence>
<reference key="1">
    <citation type="journal article" date="2004" name="J. Infect. Dis.">
        <title>Progress toward characterization of the group A Streptococcus metagenome: complete genome sequence of a macrolide-resistant serotype M6 strain.</title>
        <authorList>
            <person name="Banks D.J."/>
            <person name="Porcella S.F."/>
            <person name="Barbian K.D."/>
            <person name="Beres S.B."/>
            <person name="Philips L.E."/>
            <person name="Voyich J.M."/>
            <person name="DeLeo F.R."/>
            <person name="Martin J.M."/>
            <person name="Somerville G.A."/>
            <person name="Musser J.M."/>
        </authorList>
    </citation>
    <scope>NUCLEOTIDE SEQUENCE [LARGE SCALE GENOMIC DNA]</scope>
    <source>
        <strain>ATCC BAA-946 / MGAS10394</strain>
    </source>
</reference>
<name>EX7L_STRP6</name>
<keyword id="KW-0963">Cytoplasm</keyword>
<keyword id="KW-0269">Exonuclease</keyword>
<keyword id="KW-0378">Hydrolase</keyword>
<keyword id="KW-0540">Nuclease</keyword>
<dbReference type="EC" id="3.1.11.6" evidence="1"/>
<dbReference type="EMBL" id="CP000003">
    <property type="protein sequence ID" value="AAT87388.1"/>
    <property type="status" value="ALT_INIT"/>
    <property type="molecule type" value="Genomic_DNA"/>
</dbReference>
<dbReference type="RefSeq" id="WP_011017997.1">
    <property type="nucleotide sequence ID" value="NC_006086.1"/>
</dbReference>
<dbReference type="SMR" id="Q5XB25"/>
<dbReference type="KEGG" id="spa:M6_Spy1253"/>
<dbReference type="HOGENOM" id="CLU_023625_3_1_9"/>
<dbReference type="Proteomes" id="UP000001167">
    <property type="component" value="Chromosome"/>
</dbReference>
<dbReference type="GO" id="GO:0005737">
    <property type="term" value="C:cytoplasm"/>
    <property type="evidence" value="ECO:0007669"/>
    <property type="project" value="UniProtKB-SubCell"/>
</dbReference>
<dbReference type="GO" id="GO:0009318">
    <property type="term" value="C:exodeoxyribonuclease VII complex"/>
    <property type="evidence" value="ECO:0007669"/>
    <property type="project" value="InterPro"/>
</dbReference>
<dbReference type="GO" id="GO:0008855">
    <property type="term" value="F:exodeoxyribonuclease VII activity"/>
    <property type="evidence" value="ECO:0007669"/>
    <property type="project" value="UniProtKB-UniRule"/>
</dbReference>
<dbReference type="GO" id="GO:0003676">
    <property type="term" value="F:nucleic acid binding"/>
    <property type="evidence" value="ECO:0007669"/>
    <property type="project" value="InterPro"/>
</dbReference>
<dbReference type="GO" id="GO:0006308">
    <property type="term" value="P:DNA catabolic process"/>
    <property type="evidence" value="ECO:0007669"/>
    <property type="project" value="UniProtKB-UniRule"/>
</dbReference>
<dbReference type="CDD" id="cd04489">
    <property type="entry name" value="ExoVII_LU_OBF"/>
    <property type="match status" value="1"/>
</dbReference>
<dbReference type="HAMAP" id="MF_00378">
    <property type="entry name" value="Exonuc_7_L"/>
    <property type="match status" value="1"/>
</dbReference>
<dbReference type="InterPro" id="IPR003753">
    <property type="entry name" value="Exonuc_VII_L"/>
</dbReference>
<dbReference type="InterPro" id="IPR020579">
    <property type="entry name" value="Exonuc_VII_lsu_C"/>
</dbReference>
<dbReference type="InterPro" id="IPR025824">
    <property type="entry name" value="OB-fold_nuc-bd_dom"/>
</dbReference>
<dbReference type="NCBIfam" id="TIGR00237">
    <property type="entry name" value="xseA"/>
    <property type="match status" value="1"/>
</dbReference>
<dbReference type="PANTHER" id="PTHR30008">
    <property type="entry name" value="EXODEOXYRIBONUCLEASE 7 LARGE SUBUNIT"/>
    <property type="match status" value="1"/>
</dbReference>
<dbReference type="PANTHER" id="PTHR30008:SF0">
    <property type="entry name" value="EXODEOXYRIBONUCLEASE 7 LARGE SUBUNIT"/>
    <property type="match status" value="1"/>
</dbReference>
<dbReference type="Pfam" id="PF02601">
    <property type="entry name" value="Exonuc_VII_L"/>
    <property type="match status" value="1"/>
</dbReference>
<dbReference type="Pfam" id="PF13742">
    <property type="entry name" value="tRNA_anti_2"/>
    <property type="match status" value="1"/>
</dbReference>
<accession>Q5XB25</accession>
<organism>
    <name type="scientific">Streptococcus pyogenes serotype M6 (strain ATCC BAA-946 / MGAS10394)</name>
    <dbReference type="NCBI Taxonomy" id="286636"/>
    <lineage>
        <taxon>Bacteria</taxon>
        <taxon>Bacillati</taxon>
        <taxon>Bacillota</taxon>
        <taxon>Bacilli</taxon>
        <taxon>Lactobacillales</taxon>
        <taxon>Streptococcaceae</taxon>
        <taxon>Streptococcus</taxon>
    </lineage>
</organism>
<gene>
    <name evidence="1" type="primary">xseA</name>
    <name type="ordered locus">M6_Spy1253</name>
</gene>